<feature type="chain" id="PRO_0000349811" description="tRNA-specific 2-thiouridylase MnmA">
    <location>
        <begin position="1"/>
        <end position="373"/>
    </location>
</feature>
<feature type="region of interest" description="Interaction with target base in tRNA" evidence="1">
    <location>
        <begin position="98"/>
        <end position="100"/>
    </location>
</feature>
<feature type="region of interest" description="Interaction with tRNA" evidence="1">
    <location>
        <begin position="150"/>
        <end position="152"/>
    </location>
</feature>
<feature type="region of interest" description="Interaction with tRNA" evidence="1">
    <location>
        <begin position="312"/>
        <end position="313"/>
    </location>
</feature>
<feature type="active site" description="Nucleophile" evidence="1">
    <location>
        <position position="103"/>
    </location>
</feature>
<feature type="active site" description="Cysteine persulfide intermediate" evidence="1">
    <location>
        <position position="200"/>
    </location>
</feature>
<feature type="binding site" evidence="1">
    <location>
        <begin position="12"/>
        <end position="19"/>
    </location>
    <ligand>
        <name>ATP</name>
        <dbReference type="ChEBI" id="CHEBI:30616"/>
    </ligand>
</feature>
<feature type="binding site" evidence="1">
    <location>
        <position position="38"/>
    </location>
    <ligand>
        <name>ATP</name>
        <dbReference type="ChEBI" id="CHEBI:30616"/>
    </ligand>
</feature>
<feature type="binding site" evidence="1">
    <location>
        <position position="127"/>
    </location>
    <ligand>
        <name>ATP</name>
        <dbReference type="ChEBI" id="CHEBI:30616"/>
    </ligand>
</feature>
<feature type="site" description="Interaction with tRNA" evidence="1">
    <location>
        <position position="128"/>
    </location>
</feature>
<feature type="site" description="Interaction with tRNA" evidence="1">
    <location>
        <position position="344"/>
    </location>
</feature>
<feature type="disulfide bond" description="Alternate" evidence="1">
    <location>
        <begin position="103"/>
        <end position="200"/>
    </location>
</feature>
<sequence>MTDNSKIRVVVGMSGGVDSSVTALLLKEQGYDVIGVFMKNWDDTDEFGVCTATEDYKDVAAVADQIGIPYYSVNFEKEYWDRVFEYFLAEYRAGRTPNPDVMCNKEIKFKAFLDYAMTLGADYVATGHYAQVKRDENGTVHMLRGADNGKDQTYFLSQLSQEQLQKTLFPLGHLQKSEVREIAERAGLATAKKKDSTGICFIGEKNFKQFLSQYLPAQKGRMMTIDGRDMGEHAGLMYYTIGQRGGLGIGGQHGGDNQPWFVVGKDLSQNILYVGQGFYHEALMSNSLDASVIHFTREMPEEFTFECTAKFRYRQPDSHVTVHVRGDKAEVVFAEPQRAITPGQAVVFYDGKECLGGGMIDMAYKNGQPCQYI</sequence>
<organism>
    <name type="scientific">Streptococcus pyogenes serotype M12 (strain MGAS2096)</name>
    <dbReference type="NCBI Taxonomy" id="370553"/>
    <lineage>
        <taxon>Bacteria</taxon>
        <taxon>Bacillati</taxon>
        <taxon>Bacillota</taxon>
        <taxon>Bacilli</taxon>
        <taxon>Lactobacillales</taxon>
        <taxon>Streptococcaceae</taxon>
        <taxon>Streptococcus</taxon>
    </lineage>
</organism>
<keyword id="KW-0067">ATP-binding</keyword>
<keyword id="KW-0963">Cytoplasm</keyword>
<keyword id="KW-1015">Disulfide bond</keyword>
<keyword id="KW-0547">Nucleotide-binding</keyword>
<keyword id="KW-0694">RNA-binding</keyword>
<keyword id="KW-0808">Transferase</keyword>
<keyword id="KW-0819">tRNA processing</keyword>
<keyword id="KW-0820">tRNA-binding</keyword>
<comment type="function">
    <text evidence="1">Catalyzes the 2-thiolation of uridine at the wobble position (U34) of tRNA, leading to the formation of s(2)U34.</text>
</comment>
<comment type="catalytic activity">
    <reaction evidence="1">
        <text>S-sulfanyl-L-cysteinyl-[protein] + uridine(34) in tRNA + AH2 + ATP = 2-thiouridine(34) in tRNA + L-cysteinyl-[protein] + A + AMP + diphosphate + H(+)</text>
        <dbReference type="Rhea" id="RHEA:47032"/>
        <dbReference type="Rhea" id="RHEA-COMP:10131"/>
        <dbReference type="Rhea" id="RHEA-COMP:11726"/>
        <dbReference type="Rhea" id="RHEA-COMP:11727"/>
        <dbReference type="Rhea" id="RHEA-COMP:11728"/>
        <dbReference type="ChEBI" id="CHEBI:13193"/>
        <dbReference type="ChEBI" id="CHEBI:15378"/>
        <dbReference type="ChEBI" id="CHEBI:17499"/>
        <dbReference type="ChEBI" id="CHEBI:29950"/>
        <dbReference type="ChEBI" id="CHEBI:30616"/>
        <dbReference type="ChEBI" id="CHEBI:33019"/>
        <dbReference type="ChEBI" id="CHEBI:61963"/>
        <dbReference type="ChEBI" id="CHEBI:65315"/>
        <dbReference type="ChEBI" id="CHEBI:87170"/>
        <dbReference type="ChEBI" id="CHEBI:456215"/>
        <dbReference type="EC" id="2.8.1.13"/>
    </reaction>
</comment>
<comment type="subcellular location">
    <subcellularLocation>
        <location evidence="1">Cytoplasm</location>
    </subcellularLocation>
</comment>
<comment type="similarity">
    <text evidence="1">Belongs to the MnmA/TRMU family.</text>
</comment>
<comment type="sequence caution" evidence="2">
    <conflict type="erroneous initiation">
        <sequence resource="EMBL-CDS" id="ABF36923"/>
    </conflict>
</comment>
<evidence type="ECO:0000255" key="1">
    <source>
        <dbReference type="HAMAP-Rule" id="MF_00144"/>
    </source>
</evidence>
<evidence type="ECO:0000305" key="2"/>
<gene>
    <name evidence="1" type="primary">mnmA</name>
    <name type="ordered locus">MGAS2096_Spy1871</name>
</gene>
<name>MNMA_STRPB</name>
<accession>Q1J988</accession>
<reference key="1">
    <citation type="journal article" date="2006" name="Proc. Natl. Acad. Sci. U.S.A.">
        <title>Molecular genetic anatomy of inter- and intraserotype variation in the human bacterial pathogen group A Streptococcus.</title>
        <authorList>
            <person name="Beres S.B."/>
            <person name="Richter E.W."/>
            <person name="Nagiec M.J."/>
            <person name="Sumby P."/>
            <person name="Porcella S.F."/>
            <person name="DeLeo F.R."/>
            <person name="Musser J.M."/>
        </authorList>
    </citation>
    <scope>NUCLEOTIDE SEQUENCE [LARGE SCALE GENOMIC DNA]</scope>
    <source>
        <strain>MGAS2096</strain>
    </source>
</reference>
<dbReference type="EC" id="2.8.1.13" evidence="1"/>
<dbReference type="EMBL" id="CP000261">
    <property type="protein sequence ID" value="ABF36923.1"/>
    <property type="status" value="ALT_INIT"/>
    <property type="molecule type" value="Genomic_DNA"/>
</dbReference>
<dbReference type="SMR" id="Q1J988"/>
<dbReference type="KEGG" id="spj:MGAS2096_Spy1871"/>
<dbReference type="HOGENOM" id="CLU_035188_1_0_9"/>
<dbReference type="GO" id="GO:0005737">
    <property type="term" value="C:cytoplasm"/>
    <property type="evidence" value="ECO:0007669"/>
    <property type="project" value="UniProtKB-SubCell"/>
</dbReference>
<dbReference type="GO" id="GO:0005524">
    <property type="term" value="F:ATP binding"/>
    <property type="evidence" value="ECO:0007669"/>
    <property type="project" value="UniProtKB-KW"/>
</dbReference>
<dbReference type="GO" id="GO:0000049">
    <property type="term" value="F:tRNA binding"/>
    <property type="evidence" value="ECO:0007669"/>
    <property type="project" value="UniProtKB-KW"/>
</dbReference>
<dbReference type="GO" id="GO:0103016">
    <property type="term" value="F:tRNA-uridine 2-sulfurtransferase activity"/>
    <property type="evidence" value="ECO:0007669"/>
    <property type="project" value="UniProtKB-EC"/>
</dbReference>
<dbReference type="GO" id="GO:0002143">
    <property type="term" value="P:tRNA wobble position uridine thiolation"/>
    <property type="evidence" value="ECO:0007669"/>
    <property type="project" value="TreeGrafter"/>
</dbReference>
<dbReference type="CDD" id="cd01998">
    <property type="entry name" value="MnmA_TRMU-like"/>
    <property type="match status" value="1"/>
</dbReference>
<dbReference type="FunFam" id="2.30.30.280:FF:000001">
    <property type="entry name" value="tRNA-specific 2-thiouridylase MnmA"/>
    <property type="match status" value="1"/>
</dbReference>
<dbReference type="FunFam" id="2.40.30.10:FF:000023">
    <property type="entry name" value="tRNA-specific 2-thiouridylase MnmA"/>
    <property type="match status" value="1"/>
</dbReference>
<dbReference type="FunFam" id="3.40.50.620:FF:000004">
    <property type="entry name" value="tRNA-specific 2-thiouridylase MnmA"/>
    <property type="match status" value="1"/>
</dbReference>
<dbReference type="Gene3D" id="2.30.30.280">
    <property type="entry name" value="Adenine nucleotide alpha hydrolases-like domains"/>
    <property type="match status" value="1"/>
</dbReference>
<dbReference type="Gene3D" id="3.40.50.620">
    <property type="entry name" value="HUPs"/>
    <property type="match status" value="1"/>
</dbReference>
<dbReference type="Gene3D" id="2.40.30.10">
    <property type="entry name" value="Translation factors"/>
    <property type="match status" value="1"/>
</dbReference>
<dbReference type="HAMAP" id="MF_00144">
    <property type="entry name" value="tRNA_thiouridyl_MnmA"/>
    <property type="match status" value="1"/>
</dbReference>
<dbReference type="InterPro" id="IPR004506">
    <property type="entry name" value="MnmA-like"/>
</dbReference>
<dbReference type="InterPro" id="IPR046885">
    <property type="entry name" value="MnmA-like_C"/>
</dbReference>
<dbReference type="InterPro" id="IPR046884">
    <property type="entry name" value="MnmA-like_central"/>
</dbReference>
<dbReference type="InterPro" id="IPR023382">
    <property type="entry name" value="MnmA-like_central_sf"/>
</dbReference>
<dbReference type="InterPro" id="IPR014729">
    <property type="entry name" value="Rossmann-like_a/b/a_fold"/>
</dbReference>
<dbReference type="NCBIfam" id="NF001138">
    <property type="entry name" value="PRK00143.1"/>
    <property type="match status" value="1"/>
</dbReference>
<dbReference type="NCBIfam" id="TIGR00420">
    <property type="entry name" value="trmU"/>
    <property type="match status" value="1"/>
</dbReference>
<dbReference type="PANTHER" id="PTHR11933:SF5">
    <property type="entry name" value="MITOCHONDRIAL TRNA-SPECIFIC 2-THIOURIDYLASE 1"/>
    <property type="match status" value="1"/>
</dbReference>
<dbReference type="PANTHER" id="PTHR11933">
    <property type="entry name" value="TRNA 5-METHYLAMINOMETHYL-2-THIOURIDYLATE -METHYLTRANSFERASE"/>
    <property type="match status" value="1"/>
</dbReference>
<dbReference type="Pfam" id="PF03054">
    <property type="entry name" value="tRNA_Me_trans"/>
    <property type="match status" value="1"/>
</dbReference>
<dbReference type="Pfam" id="PF20258">
    <property type="entry name" value="tRNA_Me_trans_C"/>
    <property type="match status" value="1"/>
</dbReference>
<dbReference type="Pfam" id="PF20259">
    <property type="entry name" value="tRNA_Me_trans_M"/>
    <property type="match status" value="1"/>
</dbReference>
<dbReference type="SUPFAM" id="SSF52402">
    <property type="entry name" value="Adenine nucleotide alpha hydrolases-like"/>
    <property type="match status" value="1"/>
</dbReference>
<proteinExistence type="inferred from homology"/>
<protein>
    <recommendedName>
        <fullName evidence="1">tRNA-specific 2-thiouridylase MnmA</fullName>
        <ecNumber evidence="1">2.8.1.13</ecNumber>
    </recommendedName>
</protein>